<gene>
    <name evidence="1" type="primary">ftsB</name>
    <name type="ordered locus">Bpet1803</name>
</gene>
<organism>
    <name type="scientific">Bordetella petrii (strain ATCC BAA-461 / DSM 12804 / CCUG 43448)</name>
    <dbReference type="NCBI Taxonomy" id="340100"/>
    <lineage>
        <taxon>Bacteria</taxon>
        <taxon>Pseudomonadati</taxon>
        <taxon>Pseudomonadota</taxon>
        <taxon>Betaproteobacteria</taxon>
        <taxon>Burkholderiales</taxon>
        <taxon>Alcaligenaceae</taxon>
        <taxon>Bordetella</taxon>
    </lineage>
</organism>
<accession>A9IIP9</accession>
<evidence type="ECO:0000255" key="1">
    <source>
        <dbReference type="HAMAP-Rule" id="MF_00599"/>
    </source>
</evidence>
<evidence type="ECO:0000256" key="2">
    <source>
        <dbReference type="SAM" id="MobiDB-lite"/>
    </source>
</evidence>
<feature type="chain" id="PRO_1000129921" description="Cell division protein FtsB">
    <location>
        <begin position="1"/>
        <end position="111"/>
    </location>
</feature>
<feature type="topological domain" description="Cytoplasmic" evidence="1">
    <location>
        <begin position="1"/>
        <end position="3"/>
    </location>
</feature>
<feature type="transmembrane region" description="Helical" evidence="1">
    <location>
        <begin position="4"/>
        <end position="21"/>
    </location>
</feature>
<feature type="topological domain" description="Periplasmic" evidence="1">
    <location>
        <begin position="22"/>
        <end position="111"/>
    </location>
</feature>
<feature type="region of interest" description="Disordered" evidence="2">
    <location>
        <begin position="88"/>
        <end position="111"/>
    </location>
</feature>
<feature type="coiled-coil region" evidence="1">
    <location>
        <begin position="31"/>
        <end position="62"/>
    </location>
</feature>
<feature type="compositionally biased region" description="Pro residues" evidence="2">
    <location>
        <begin position="90"/>
        <end position="100"/>
    </location>
</feature>
<feature type="compositionally biased region" description="Low complexity" evidence="2">
    <location>
        <begin position="101"/>
        <end position="111"/>
    </location>
</feature>
<sequence length="111" mass="12123">MRLLFLVLLVLLGLIQYPLWLGKGGWFKVWDLQRQVAAQHETNDGLRARNAALEAEVRDLATGVGAIEERARSELGMMREGEVFVQIVPPGTPVPQPAPGAPGQTASAPRR</sequence>
<proteinExistence type="inferred from homology"/>
<keyword id="KW-0131">Cell cycle</keyword>
<keyword id="KW-0132">Cell division</keyword>
<keyword id="KW-0997">Cell inner membrane</keyword>
<keyword id="KW-1003">Cell membrane</keyword>
<keyword id="KW-0175">Coiled coil</keyword>
<keyword id="KW-0472">Membrane</keyword>
<keyword id="KW-0812">Transmembrane</keyword>
<keyword id="KW-1133">Transmembrane helix</keyword>
<name>FTSB_BORPD</name>
<comment type="function">
    <text evidence="1">Essential cell division protein. May link together the upstream cell division proteins, which are predominantly cytoplasmic, with the downstream cell division proteins, which are predominantly periplasmic.</text>
</comment>
<comment type="subunit">
    <text evidence="1">Part of a complex composed of FtsB, FtsL and FtsQ.</text>
</comment>
<comment type="subcellular location">
    <subcellularLocation>
        <location evidence="1">Cell inner membrane</location>
        <topology evidence="1">Single-pass type II membrane protein</topology>
    </subcellularLocation>
    <text evidence="1">Localizes to the division septum.</text>
</comment>
<comment type="similarity">
    <text evidence="1">Belongs to the FtsB family.</text>
</comment>
<protein>
    <recommendedName>
        <fullName evidence="1">Cell division protein FtsB</fullName>
    </recommendedName>
</protein>
<dbReference type="EMBL" id="AM902716">
    <property type="protein sequence ID" value="CAP42142.1"/>
    <property type="molecule type" value="Genomic_DNA"/>
</dbReference>
<dbReference type="SMR" id="A9IIP9"/>
<dbReference type="STRING" id="94624.Bpet1803"/>
<dbReference type="KEGG" id="bpt:Bpet1803"/>
<dbReference type="eggNOG" id="COG2919">
    <property type="taxonomic scope" value="Bacteria"/>
</dbReference>
<dbReference type="Proteomes" id="UP000001225">
    <property type="component" value="Chromosome"/>
</dbReference>
<dbReference type="GO" id="GO:0032153">
    <property type="term" value="C:cell division site"/>
    <property type="evidence" value="ECO:0007669"/>
    <property type="project" value="UniProtKB-UniRule"/>
</dbReference>
<dbReference type="GO" id="GO:0030428">
    <property type="term" value="C:cell septum"/>
    <property type="evidence" value="ECO:0007669"/>
    <property type="project" value="TreeGrafter"/>
</dbReference>
<dbReference type="GO" id="GO:0005886">
    <property type="term" value="C:plasma membrane"/>
    <property type="evidence" value="ECO:0007669"/>
    <property type="project" value="UniProtKB-SubCell"/>
</dbReference>
<dbReference type="GO" id="GO:0043093">
    <property type="term" value="P:FtsZ-dependent cytokinesis"/>
    <property type="evidence" value="ECO:0007669"/>
    <property type="project" value="UniProtKB-UniRule"/>
</dbReference>
<dbReference type="HAMAP" id="MF_00599">
    <property type="entry name" value="FtsB"/>
    <property type="match status" value="1"/>
</dbReference>
<dbReference type="InterPro" id="IPR023081">
    <property type="entry name" value="Cell_div_FtsB"/>
</dbReference>
<dbReference type="InterPro" id="IPR007060">
    <property type="entry name" value="FtsL/DivIC"/>
</dbReference>
<dbReference type="NCBIfam" id="NF002058">
    <property type="entry name" value="PRK00888.1"/>
    <property type="match status" value="1"/>
</dbReference>
<dbReference type="PANTHER" id="PTHR37485">
    <property type="entry name" value="CELL DIVISION PROTEIN FTSB"/>
    <property type="match status" value="1"/>
</dbReference>
<dbReference type="PANTHER" id="PTHR37485:SF1">
    <property type="entry name" value="CELL DIVISION PROTEIN FTSB"/>
    <property type="match status" value="1"/>
</dbReference>
<dbReference type="Pfam" id="PF04977">
    <property type="entry name" value="DivIC"/>
    <property type="match status" value="1"/>
</dbReference>
<reference key="1">
    <citation type="journal article" date="2008" name="BMC Genomics">
        <title>The missing link: Bordetella petrii is endowed with both the metabolic versatility of environmental bacteria and virulence traits of pathogenic Bordetellae.</title>
        <authorList>
            <person name="Gross R."/>
            <person name="Guzman C.A."/>
            <person name="Sebaihia M."/>
            <person name="Martin dos Santos V.A.P."/>
            <person name="Pieper D.H."/>
            <person name="Koebnik R."/>
            <person name="Lechner M."/>
            <person name="Bartels D."/>
            <person name="Buhrmester J."/>
            <person name="Choudhuri J.V."/>
            <person name="Ebensen T."/>
            <person name="Gaigalat L."/>
            <person name="Herrmann S."/>
            <person name="Khachane A.N."/>
            <person name="Larisch C."/>
            <person name="Link S."/>
            <person name="Linke B."/>
            <person name="Meyer F."/>
            <person name="Mormann S."/>
            <person name="Nakunst D."/>
            <person name="Rueckert C."/>
            <person name="Schneiker-Bekel S."/>
            <person name="Schulze K."/>
            <person name="Voerholter F.-J."/>
            <person name="Yevsa T."/>
            <person name="Engle J.T."/>
            <person name="Goldman W.E."/>
            <person name="Puehler A."/>
            <person name="Goebel U.B."/>
            <person name="Goesmann A."/>
            <person name="Bloecker H."/>
            <person name="Kaiser O."/>
            <person name="Martinez-Arias R."/>
        </authorList>
    </citation>
    <scope>NUCLEOTIDE SEQUENCE [LARGE SCALE GENOMIC DNA]</scope>
    <source>
        <strain>ATCC BAA-461 / DSM 12804 / CCUG 43448</strain>
    </source>
</reference>